<reference key="1">
    <citation type="journal article" date="1994" name="Science">
        <title>Complete nucleotide sequence of Saccharomyces cerevisiae chromosome VIII.</title>
        <authorList>
            <person name="Johnston M."/>
            <person name="Andrews S."/>
            <person name="Brinkman R."/>
            <person name="Cooper J."/>
            <person name="Ding H."/>
            <person name="Dover J."/>
            <person name="Du Z."/>
            <person name="Favello A."/>
            <person name="Fulton L."/>
            <person name="Gattung S."/>
            <person name="Geisel C."/>
            <person name="Kirsten J."/>
            <person name="Kucaba T."/>
            <person name="Hillier L.W."/>
            <person name="Jier M."/>
            <person name="Johnston L."/>
            <person name="Langston Y."/>
            <person name="Latreille P."/>
            <person name="Louis E.J."/>
            <person name="Macri C."/>
            <person name="Mardis E."/>
            <person name="Menezes S."/>
            <person name="Mouser L."/>
            <person name="Nhan M."/>
            <person name="Rifkin L."/>
            <person name="Riles L."/>
            <person name="St Peter H."/>
            <person name="Trevaskis E."/>
            <person name="Vaughan K."/>
            <person name="Vignati D."/>
            <person name="Wilcox L."/>
            <person name="Wohldman P."/>
            <person name="Waterston R."/>
            <person name="Wilson R."/>
            <person name="Vaudin M."/>
        </authorList>
    </citation>
    <scope>NUCLEOTIDE SEQUENCE [LARGE SCALE GENOMIC DNA]</scope>
    <source>
        <strain>ATCC 204508 / S288c</strain>
    </source>
</reference>
<reference key="2">
    <citation type="journal article" date="2014" name="G3 (Bethesda)">
        <title>The reference genome sequence of Saccharomyces cerevisiae: Then and now.</title>
        <authorList>
            <person name="Engel S.R."/>
            <person name="Dietrich F.S."/>
            <person name="Fisk D.G."/>
            <person name="Binkley G."/>
            <person name="Balakrishnan R."/>
            <person name="Costanzo M.C."/>
            <person name="Dwight S.S."/>
            <person name="Hitz B.C."/>
            <person name="Karra K."/>
            <person name="Nash R.S."/>
            <person name="Weng S."/>
            <person name="Wong E.D."/>
            <person name="Lloyd P."/>
            <person name="Skrzypek M.S."/>
            <person name="Miyasato S.R."/>
            <person name="Simison M."/>
            <person name="Cherry J.M."/>
        </authorList>
    </citation>
    <scope>GENOME REANNOTATION</scope>
    <source>
        <strain>ATCC 204508 / S288c</strain>
    </source>
</reference>
<reference key="3">
    <citation type="journal article" date="2002" name="Nat. Biotechnol.">
        <title>An integrated approach for finding overlooked genes in yeast.</title>
        <authorList>
            <person name="Kumar A."/>
            <person name="Harrison P.M."/>
            <person name="Cheung K.-H."/>
            <person name="Lan N."/>
            <person name="Echols N."/>
            <person name="Bertone P."/>
            <person name="Miller P."/>
            <person name="Gerstein M.B."/>
            <person name="Snyder M."/>
        </authorList>
    </citation>
    <scope>NUCLEOTIDE SEQUENCE [GENOMIC DNA]</scope>
</reference>
<accession>Q8TGK1</accession>
<accession>D3DLG4</accession>
<gene>
    <name type="ordered locus">YHR213W-B</name>
</gene>
<feature type="chain" id="PRO_0000245399" description="Uncharacterized protein YHR213W-B">
    <location>
        <begin position="1"/>
        <end position="99"/>
    </location>
</feature>
<sequence length="99" mass="11184">MLIDFCCSYIAGTHGRERAPSFTGTFVSHVSAENNCRPRRSEITQPCASGTEKKHFAATEKQCTNSLEGSRKDFLSLPLGHSYLFLFCFWRMICSEPKL</sequence>
<protein>
    <recommendedName>
        <fullName>Uncharacterized protein YHR213W-B</fullName>
    </recommendedName>
</protein>
<name>YH21B_YEAST</name>
<organism>
    <name type="scientific">Saccharomyces cerevisiae (strain ATCC 204508 / S288c)</name>
    <name type="common">Baker's yeast</name>
    <dbReference type="NCBI Taxonomy" id="559292"/>
    <lineage>
        <taxon>Eukaryota</taxon>
        <taxon>Fungi</taxon>
        <taxon>Dikarya</taxon>
        <taxon>Ascomycota</taxon>
        <taxon>Saccharomycotina</taxon>
        <taxon>Saccharomycetes</taxon>
        <taxon>Saccharomycetales</taxon>
        <taxon>Saccharomycetaceae</taxon>
        <taxon>Saccharomyces</taxon>
    </lineage>
</organism>
<dbReference type="EMBL" id="U00029">
    <property type="status" value="NOT_ANNOTATED_CDS"/>
    <property type="molecule type" value="Genomic_DNA"/>
</dbReference>
<dbReference type="EMBL" id="AF479996">
    <property type="protein sequence ID" value="AAL79309.1"/>
    <property type="molecule type" value="Genomic_DNA"/>
</dbReference>
<dbReference type="EMBL" id="BK006934">
    <property type="protein sequence ID" value="DAA06908.1"/>
    <property type="molecule type" value="Genomic_DNA"/>
</dbReference>
<dbReference type="RefSeq" id="NP_878093.1">
    <property type="nucleotide sequence ID" value="NM_001184600.1"/>
</dbReference>
<dbReference type="BioGRID" id="37075">
    <property type="interactions" value="35"/>
</dbReference>
<dbReference type="FunCoup" id="Q8TGK1">
    <property type="interactions" value="17"/>
</dbReference>
<dbReference type="STRING" id="4932.YHR213W-B"/>
<dbReference type="PaxDb" id="4932-YHR213W-B"/>
<dbReference type="EnsemblFungi" id="YHR213W-B_mRNA">
    <property type="protein sequence ID" value="YHR213W-B"/>
    <property type="gene ID" value="YHR213W-B"/>
</dbReference>
<dbReference type="GeneID" id="1466533"/>
<dbReference type="KEGG" id="sce:YHR213W-B"/>
<dbReference type="AGR" id="SGD:S000028652"/>
<dbReference type="SGD" id="S000028652">
    <property type="gene designation" value="YHR213W-B"/>
</dbReference>
<dbReference type="VEuPathDB" id="FungiDB:YHR213W-B"/>
<dbReference type="HOGENOM" id="CLU_2321683_0_0_1"/>
<dbReference type="InParanoid" id="Q8TGK1"/>
<dbReference type="BioCyc" id="YEAST:G3O-31272-MONOMER"/>
<dbReference type="PRO" id="PR:Q8TGK1"/>
<dbReference type="Proteomes" id="UP000002311">
    <property type="component" value="Chromosome VIII"/>
</dbReference>
<dbReference type="RNAct" id="Q8TGK1">
    <property type="molecule type" value="protein"/>
</dbReference>
<keyword id="KW-1185">Reference proteome</keyword>
<proteinExistence type="evidence at transcript level"/>